<gene>
    <name evidence="2" type="primary">infB</name>
    <name type="ordered locus">Teth514_1645</name>
</gene>
<sequence>MSKTRVYELAKELNLSSKDLISKLNDLDIKVKNHMSTLEDEEVELIMDLLRDKPQQTEEVHQKEEEDIFEDNLEDIEEERVYKKSFKKGSKKNKKNNKKAVLTEEKEEDEIKIITIPEFLTVKELAEKMKVNPTEIIKKLIAKGIMVTVNQQIDFENAAKIAEEYGFLVDKEEVKDELEMLLEETPDDEKDLQPRPPIVTVMGHVDHGKTSLLDAIRNTNVTMKEMGGITQHIGASVVEINDKKIVFLDTPGHEAFTAMRARGASITDIVVLVVAADDGVMPQTVEAINHVKAANVPMIVAINKIDLPTANPDRVKTELSELGLVPEEWGGNTICVPVSAKKNIGIDNLLEMILLVAEMEDLKANPNKPARGTIIEAKLEKGKGPVATVIVQNGTLQIGDAILAGTVYGKVRAMLDDKGRRIKKAGPSMPVEVLGFSEVPEAGDKLIVVEDEKKARELAERRKELQKEMELKRKQKVSLEDLFSQIQEGSVKELNIIIKADVQGSVEALKKSIEDLSNEEVRIKVIHGAVGAITETDVMLASASNAIIIGFNVRPETNAKNLAEKEKVDIKLYRIIYEAIEDIKAAMKGLLEPKYKEVELGRAEVRAVFRVPGVGNVAGCYVLSGKILRNSDIRVVRDGIVVYEGKIASLKRFKDDVREVQQGFECGIGIDRFNDIKEGDIIEAYQMEEIPR</sequence>
<protein>
    <recommendedName>
        <fullName evidence="2">Translation initiation factor IF-2</fullName>
    </recommendedName>
</protein>
<organism>
    <name type="scientific">Thermoanaerobacter sp. (strain X514)</name>
    <dbReference type="NCBI Taxonomy" id="399726"/>
    <lineage>
        <taxon>Bacteria</taxon>
        <taxon>Bacillati</taxon>
        <taxon>Bacillota</taxon>
        <taxon>Clostridia</taxon>
        <taxon>Thermoanaerobacterales</taxon>
        <taxon>Thermoanaerobacteraceae</taxon>
        <taxon>Thermoanaerobacter</taxon>
    </lineage>
</organism>
<keyword id="KW-0963">Cytoplasm</keyword>
<keyword id="KW-0342">GTP-binding</keyword>
<keyword id="KW-0396">Initiation factor</keyword>
<keyword id="KW-0547">Nucleotide-binding</keyword>
<keyword id="KW-0648">Protein biosynthesis</keyword>
<reference key="1">
    <citation type="submission" date="2008-01" db="EMBL/GenBank/DDBJ databases">
        <title>Complete sequence of Thermoanaerobacter sp. X514.</title>
        <authorList>
            <consortium name="US DOE Joint Genome Institute"/>
            <person name="Copeland A."/>
            <person name="Lucas S."/>
            <person name="Lapidus A."/>
            <person name="Barry K."/>
            <person name="Glavina del Rio T."/>
            <person name="Dalin E."/>
            <person name="Tice H."/>
            <person name="Pitluck S."/>
            <person name="Bruce D."/>
            <person name="Goodwin L."/>
            <person name="Saunders E."/>
            <person name="Brettin T."/>
            <person name="Detter J.C."/>
            <person name="Han C."/>
            <person name="Schmutz J."/>
            <person name="Larimer F."/>
            <person name="Land M."/>
            <person name="Hauser L."/>
            <person name="Kyrpides N."/>
            <person name="Kim E."/>
            <person name="Hemme C."/>
            <person name="Fields M.W."/>
            <person name="He Z."/>
            <person name="Zhou J."/>
            <person name="Richardson P."/>
        </authorList>
    </citation>
    <scope>NUCLEOTIDE SEQUENCE [LARGE SCALE GENOMIC DNA]</scope>
    <source>
        <strain>X514</strain>
    </source>
</reference>
<feature type="chain" id="PRO_1000093839" description="Translation initiation factor IF-2">
    <location>
        <begin position="1"/>
        <end position="692"/>
    </location>
</feature>
<feature type="domain" description="tr-type G">
    <location>
        <begin position="194"/>
        <end position="363"/>
    </location>
</feature>
<feature type="region of interest" description="G1" evidence="1">
    <location>
        <begin position="203"/>
        <end position="210"/>
    </location>
</feature>
<feature type="region of interest" description="G2" evidence="1">
    <location>
        <begin position="228"/>
        <end position="232"/>
    </location>
</feature>
<feature type="region of interest" description="G3" evidence="1">
    <location>
        <begin position="249"/>
        <end position="252"/>
    </location>
</feature>
<feature type="region of interest" description="G4" evidence="1">
    <location>
        <begin position="303"/>
        <end position="306"/>
    </location>
</feature>
<feature type="region of interest" description="G5" evidence="1">
    <location>
        <begin position="339"/>
        <end position="341"/>
    </location>
</feature>
<feature type="binding site" evidence="2">
    <location>
        <begin position="203"/>
        <end position="210"/>
    </location>
    <ligand>
        <name>GTP</name>
        <dbReference type="ChEBI" id="CHEBI:37565"/>
    </ligand>
</feature>
<feature type="binding site" evidence="2">
    <location>
        <begin position="249"/>
        <end position="253"/>
    </location>
    <ligand>
        <name>GTP</name>
        <dbReference type="ChEBI" id="CHEBI:37565"/>
    </ligand>
</feature>
<feature type="binding site" evidence="2">
    <location>
        <begin position="303"/>
        <end position="306"/>
    </location>
    <ligand>
        <name>GTP</name>
        <dbReference type="ChEBI" id="CHEBI:37565"/>
    </ligand>
</feature>
<name>IF2_THEPX</name>
<accession>B0K1D6</accession>
<evidence type="ECO:0000250" key="1"/>
<evidence type="ECO:0000255" key="2">
    <source>
        <dbReference type="HAMAP-Rule" id="MF_00100"/>
    </source>
</evidence>
<comment type="function">
    <text evidence="2">One of the essential components for the initiation of protein synthesis. Protects formylmethionyl-tRNA from spontaneous hydrolysis and promotes its binding to the 30S ribosomal subunits. Also involved in the hydrolysis of GTP during the formation of the 70S ribosomal complex.</text>
</comment>
<comment type="subcellular location">
    <subcellularLocation>
        <location evidence="2">Cytoplasm</location>
    </subcellularLocation>
</comment>
<comment type="similarity">
    <text evidence="2">Belongs to the TRAFAC class translation factor GTPase superfamily. Classic translation factor GTPase family. IF-2 subfamily.</text>
</comment>
<dbReference type="EMBL" id="CP000923">
    <property type="protein sequence ID" value="ABY92931.1"/>
    <property type="molecule type" value="Genomic_DNA"/>
</dbReference>
<dbReference type="SMR" id="B0K1D6"/>
<dbReference type="KEGG" id="tex:Teth514_1645"/>
<dbReference type="HOGENOM" id="CLU_006301_5_1_9"/>
<dbReference type="Proteomes" id="UP000002155">
    <property type="component" value="Chromosome"/>
</dbReference>
<dbReference type="GO" id="GO:0005829">
    <property type="term" value="C:cytosol"/>
    <property type="evidence" value="ECO:0007669"/>
    <property type="project" value="TreeGrafter"/>
</dbReference>
<dbReference type="GO" id="GO:0005525">
    <property type="term" value="F:GTP binding"/>
    <property type="evidence" value="ECO:0007669"/>
    <property type="project" value="UniProtKB-KW"/>
</dbReference>
<dbReference type="GO" id="GO:0003924">
    <property type="term" value="F:GTPase activity"/>
    <property type="evidence" value="ECO:0007669"/>
    <property type="project" value="UniProtKB-UniRule"/>
</dbReference>
<dbReference type="GO" id="GO:0003743">
    <property type="term" value="F:translation initiation factor activity"/>
    <property type="evidence" value="ECO:0007669"/>
    <property type="project" value="UniProtKB-UniRule"/>
</dbReference>
<dbReference type="CDD" id="cd01887">
    <property type="entry name" value="IF2_eIF5B"/>
    <property type="match status" value="1"/>
</dbReference>
<dbReference type="CDD" id="cd03702">
    <property type="entry name" value="IF2_mtIF2_II"/>
    <property type="match status" value="1"/>
</dbReference>
<dbReference type="CDD" id="cd03692">
    <property type="entry name" value="mtIF2_IVc"/>
    <property type="match status" value="1"/>
</dbReference>
<dbReference type="FunFam" id="2.40.30.10:FF:000008">
    <property type="entry name" value="Translation initiation factor IF-2"/>
    <property type="match status" value="1"/>
</dbReference>
<dbReference type="FunFam" id="2.40.30.10:FF:000054">
    <property type="entry name" value="Translation initiation factor IF-2"/>
    <property type="match status" value="1"/>
</dbReference>
<dbReference type="FunFam" id="3.40.50.10050:FF:000001">
    <property type="entry name" value="Translation initiation factor IF-2"/>
    <property type="match status" value="1"/>
</dbReference>
<dbReference type="FunFam" id="3.40.50.300:FF:000019">
    <property type="entry name" value="Translation initiation factor IF-2"/>
    <property type="match status" value="1"/>
</dbReference>
<dbReference type="Gene3D" id="1.10.10.2480">
    <property type="match status" value="1"/>
</dbReference>
<dbReference type="Gene3D" id="3.40.50.300">
    <property type="entry name" value="P-loop containing nucleotide triphosphate hydrolases"/>
    <property type="match status" value="1"/>
</dbReference>
<dbReference type="Gene3D" id="2.40.30.10">
    <property type="entry name" value="Translation factors"/>
    <property type="match status" value="2"/>
</dbReference>
<dbReference type="Gene3D" id="3.40.50.10050">
    <property type="entry name" value="Translation initiation factor IF- 2, domain 3"/>
    <property type="match status" value="1"/>
</dbReference>
<dbReference type="HAMAP" id="MF_00100_B">
    <property type="entry name" value="IF_2_B"/>
    <property type="match status" value="1"/>
</dbReference>
<dbReference type="InterPro" id="IPR053905">
    <property type="entry name" value="EF-G-like_DII"/>
</dbReference>
<dbReference type="InterPro" id="IPR044145">
    <property type="entry name" value="IF2_II"/>
</dbReference>
<dbReference type="InterPro" id="IPR006847">
    <property type="entry name" value="IF2_N"/>
</dbReference>
<dbReference type="InterPro" id="IPR027417">
    <property type="entry name" value="P-loop_NTPase"/>
</dbReference>
<dbReference type="InterPro" id="IPR005225">
    <property type="entry name" value="Small_GTP-bd"/>
</dbReference>
<dbReference type="InterPro" id="IPR000795">
    <property type="entry name" value="T_Tr_GTP-bd_dom"/>
</dbReference>
<dbReference type="InterPro" id="IPR000178">
    <property type="entry name" value="TF_IF2_bacterial-like"/>
</dbReference>
<dbReference type="InterPro" id="IPR015760">
    <property type="entry name" value="TIF_IF2"/>
</dbReference>
<dbReference type="InterPro" id="IPR023115">
    <property type="entry name" value="TIF_IF2_dom3"/>
</dbReference>
<dbReference type="InterPro" id="IPR036925">
    <property type="entry name" value="TIF_IF2_dom3_sf"/>
</dbReference>
<dbReference type="InterPro" id="IPR009000">
    <property type="entry name" value="Transl_B-barrel_sf"/>
</dbReference>
<dbReference type="NCBIfam" id="TIGR00487">
    <property type="entry name" value="IF-2"/>
    <property type="match status" value="1"/>
</dbReference>
<dbReference type="NCBIfam" id="TIGR00231">
    <property type="entry name" value="small_GTP"/>
    <property type="match status" value="1"/>
</dbReference>
<dbReference type="PANTHER" id="PTHR43381:SF5">
    <property type="entry name" value="TR-TYPE G DOMAIN-CONTAINING PROTEIN"/>
    <property type="match status" value="1"/>
</dbReference>
<dbReference type="PANTHER" id="PTHR43381">
    <property type="entry name" value="TRANSLATION INITIATION FACTOR IF-2-RELATED"/>
    <property type="match status" value="1"/>
</dbReference>
<dbReference type="Pfam" id="PF22042">
    <property type="entry name" value="EF-G_D2"/>
    <property type="match status" value="1"/>
</dbReference>
<dbReference type="Pfam" id="PF00009">
    <property type="entry name" value="GTP_EFTU"/>
    <property type="match status" value="1"/>
</dbReference>
<dbReference type="Pfam" id="PF11987">
    <property type="entry name" value="IF-2"/>
    <property type="match status" value="1"/>
</dbReference>
<dbReference type="Pfam" id="PF04760">
    <property type="entry name" value="IF2_N"/>
    <property type="match status" value="2"/>
</dbReference>
<dbReference type="SUPFAM" id="SSF52156">
    <property type="entry name" value="Initiation factor IF2/eIF5b, domain 3"/>
    <property type="match status" value="1"/>
</dbReference>
<dbReference type="SUPFAM" id="SSF52540">
    <property type="entry name" value="P-loop containing nucleoside triphosphate hydrolases"/>
    <property type="match status" value="1"/>
</dbReference>
<dbReference type="SUPFAM" id="SSF50447">
    <property type="entry name" value="Translation proteins"/>
    <property type="match status" value="2"/>
</dbReference>
<dbReference type="PROSITE" id="PS51722">
    <property type="entry name" value="G_TR_2"/>
    <property type="match status" value="1"/>
</dbReference>
<dbReference type="PROSITE" id="PS01176">
    <property type="entry name" value="IF2"/>
    <property type="match status" value="1"/>
</dbReference>
<proteinExistence type="inferred from homology"/>